<name>SYY_RHORT</name>
<organism>
    <name type="scientific">Rhodospirillum rubrum (strain ATCC 11170 / ATH 1.1.1 / DSM 467 / LMG 4362 / NCIMB 8255 / S1)</name>
    <dbReference type="NCBI Taxonomy" id="269796"/>
    <lineage>
        <taxon>Bacteria</taxon>
        <taxon>Pseudomonadati</taxon>
        <taxon>Pseudomonadota</taxon>
        <taxon>Alphaproteobacteria</taxon>
        <taxon>Rhodospirillales</taxon>
        <taxon>Rhodospirillaceae</taxon>
        <taxon>Rhodospirillum</taxon>
    </lineage>
</organism>
<feature type="chain" id="PRO_0000234759" description="Tyrosine--tRNA ligase">
    <location>
        <begin position="1"/>
        <end position="418"/>
    </location>
</feature>
<feature type="domain" description="S4 RNA-binding" evidence="1">
    <location>
        <begin position="350"/>
        <end position="416"/>
    </location>
</feature>
<feature type="short sequence motif" description="'HIGH' region">
    <location>
        <begin position="44"/>
        <end position="53"/>
    </location>
</feature>
<feature type="short sequence motif" description="'KMSKS' region">
    <location>
        <begin position="236"/>
        <end position="240"/>
    </location>
</feature>
<feature type="binding site" evidence="1">
    <location>
        <position position="39"/>
    </location>
    <ligand>
        <name>L-tyrosine</name>
        <dbReference type="ChEBI" id="CHEBI:58315"/>
    </ligand>
</feature>
<feature type="binding site" evidence="1">
    <location>
        <position position="176"/>
    </location>
    <ligand>
        <name>L-tyrosine</name>
        <dbReference type="ChEBI" id="CHEBI:58315"/>
    </ligand>
</feature>
<feature type="binding site" evidence="1">
    <location>
        <position position="180"/>
    </location>
    <ligand>
        <name>L-tyrosine</name>
        <dbReference type="ChEBI" id="CHEBI:58315"/>
    </ligand>
</feature>
<feature type="binding site" evidence="1">
    <location>
        <position position="239"/>
    </location>
    <ligand>
        <name>ATP</name>
        <dbReference type="ChEBI" id="CHEBI:30616"/>
    </ligand>
</feature>
<evidence type="ECO:0000255" key="1">
    <source>
        <dbReference type="HAMAP-Rule" id="MF_02006"/>
    </source>
</evidence>
<gene>
    <name evidence="1" type="primary">tyrS</name>
    <name type="ordered locus">Rru_A2032</name>
</gene>
<protein>
    <recommendedName>
        <fullName evidence="1">Tyrosine--tRNA ligase</fullName>
        <ecNumber evidence="1">6.1.1.1</ecNumber>
    </recommendedName>
    <alternativeName>
        <fullName evidence="1">Tyrosyl-tRNA synthetase</fullName>
        <shortName evidence="1">TyrRS</shortName>
    </alternativeName>
</protein>
<reference key="1">
    <citation type="journal article" date="2011" name="Stand. Genomic Sci.">
        <title>Complete genome sequence of Rhodospirillum rubrum type strain (S1).</title>
        <authorList>
            <person name="Munk A.C."/>
            <person name="Copeland A."/>
            <person name="Lucas S."/>
            <person name="Lapidus A."/>
            <person name="Del Rio T.G."/>
            <person name="Barry K."/>
            <person name="Detter J.C."/>
            <person name="Hammon N."/>
            <person name="Israni S."/>
            <person name="Pitluck S."/>
            <person name="Brettin T."/>
            <person name="Bruce D."/>
            <person name="Han C."/>
            <person name="Tapia R."/>
            <person name="Gilna P."/>
            <person name="Schmutz J."/>
            <person name="Larimer F."/>
            <person name="Land M."/>
            <person name="Kyrpides N.C."/>
            <person name="Mavromatis K."/>
            <person name="Richardson P."/>
            <person name="Rohde M."/>
            <person name="Goeker M."/>
            <person name="Klenk H.P."/>
            <person name="Zhang Y."/>
            <person name="Roberts G.P."/>
            <person name="Reslewic S."/>
            <person name="Schwartz D.C."/>
        </authorList>
    </citation>
    <scope>NUCLEOTIDE SEQUENCE [LARGE SCALE GENOMIC DNA]</scope>
    <source>
        <strain>ATCC 11170 / ATH 1.1.1 / DSM 467 / LMG 4362 / NCIMB 8255 / S1</strain>
    </source>
</reference>
<proteinExistence type="inferred from homology"/>
<keyword id="KW-0030">Aminoacyl-tRNA synthetase</keyword>
<keyword id="KW-0067">ATP-binding</keyword>
<keyword id="KW-0963">Cytoplasm</keyword>
<keyword id="KW-0436">Ligase</keyword>
<keyword id="KW-0547">Nucleotide-binding</keyword>
<keyword id="KW-0648">Protein biosynthesis</keyword>
<keyword id="KW-1185">Reference proteome</keyword>
<keyword id="KW-0694">RNA-binding</keyword>
<comment type="function">
    <text evidence="1">Catalyzes the attachment of tyrosine to tRNA(Tyr) in a two-step reaction: tyrosine is first activated by ATP to form Tyr-AMP and then transferred to the acceptor end of tRNA(Tyr).</text>
</comment>
<comment type="catalytic activity">
    <reaction evidence="1">
        <text>tRNA(Tyr) + L-tyrosine + ATP = L-tyrosyl-tRNA(Tyr) + AMP + diphosphate + H(+)</text>
        <dbReference type="Rhea" id="RHEA:10220"/>
        <dbReference type="Rhea" id="RHEA-COMP:9706"/>
        <dbReference type="Rhea" id="RHEA-COMP:9707"/>
        <dbReference type="ChEBI" id="CHEBI:15378"/>
        <dbReference type="ChEBI" id="CHEBI:30616"/>
        <dbReference type="ChEBI" id="CHEBI:33019"/>
        <dbReference type="ChEBI" id="CHEBI:58315"/>
        <dbReference type="ChEBI" id="CHEBI:78442"/>
        <dbReference type="ChEBI" id="CHEBI:78536"/>
        <dbReference type="ChEBI" id="CHEBI:456215"/>
        <dbReference type="EC" id="6.1.1.1"/>
    </reaction>
</comment>
<comment type="subunit">
    <text evidence="1">Homodimer.</text>
</comment>
<comment type="subcellular location">
    <subcellularLocation>
        <location evidence="1">Cytoplasm</location>
    </subcellularLocation>
</comment>
<comment type="similarity">
    <text evidence="1">Belongs to the class-I aminoacyl-tRNA synthetase family. TyrS type 1 subfamily.</text>
</comment>
<accession>Q2RSR3</accession>
<sequence>MTAPKSEFLAVVRDRGFIHQCTDLDGLDALLAKGPVSAYIGFDCTADSLHVGSLIQIMLLHWLQRTGHRPVVLMGGGTTRIGDPSFRDEARPLLTDEKIGQNMAGIRQVFSRFLSFGEGATDAVMVNNADWLDGLAYIPFLRDFGRHFSVNRMLTFDSVRLRLDREQPLSFLEFNYMILQAYDFLELGRRTGVRLQMGGSDQWGNIVNGVELGRRVDGLELFGLTSPLITTASGAKMGKTAQGAVWLNEARLPAYDYWQFWRNTEDADVGRFLRLFTDLPLDEVARLEALGGAEINEAKKILAERATTMAHGPEAALTAAETARKVFEQGGTGDALPTHDVAAEALAAGLPLAEMMRATGLAASGKEVKRLVSEGGARINDVAVSDAARLLGPADVQDGAIKLSAGKKRHALIRVLPG</sequence>
<dbReference type="EC" id="6.1.1.1" evidence="1"/>
<dbReference type="EMBL" id="CP000230">
    <property type="protein sequence ID" value="ABC22832.1"/>
    <property type="molecule type" value="Genomic_DNA"/>
</dbReference>
<dbReference type="RefSeq" id="WP_011389785.1">
    <property type="nucleotide sequence ID" value="NC_007643.1"/>
</dbReference>
<dbReference type="RefSeq" id="YP_427119.1">
    <property type="nucleotide sequence ID" value="NC_007643.1"/>
</dbReference>
<dbReference type="SMR" id="Q2RSR3"/>
<dbReference type="STRING" id="269796.Rru_A2032"/>
<dbReference type="EnsemblBacteria" id="ABC22832">
    <property type="protein sequence ID" value="ABC22832"/>
    <property type="gene ID" value="Rru_A2032"/>
</dbReference>
<dbReference type="KEGG" id="rru:Rru_A2032"/>
<dbReference type="PATRIC" id="fig|269796.9.peg.2119"/>
<dbReference type="eggNOG" id="COG0162">
    <property type="taxonomic scope" value="Bacteria"/>
</dbReference>
<dbReference type="HOGENOM" id="CLU_024003_0_3_5"/>
<dbReference type="PhylomeDB" id="Q2RSR3"/>
<dbReference type="Proteomes" id="UP000001929">
    <property type="component" value="Chromosome"/>
</dbReference>
<dbReference type="GO" id="GO:0005829">
    <property type="term" value="C:cytosol"/>
    <property type="evidence" value="ECO:0007669"/>
    <property type="project" value="TreeGrafter"/>
</dbReference>
<dbReference type="GO" id="GO:0005524">
    <property type="term" value="F:ATP binding"/>
    <property type="evidence" value="ECO:0007669"/>
    <property type="project" value="UniProtKB-UniRule"/>
</dbReference>
<dbReference type="GO" id="GO:0003723">
    <property type="term" value="F:RNA binding"/>
    <property type="evidence" value="ECO:0007669"/>
    <property type="project" value="UniProtKB-KW"/>
</dbReference>
<dbReference type="GO" id="GO:0004831">
    <property type="term" value="F:tyrosine-tRNA ligase activity"/>
    <property type="evidence" value="ECO:0007669"/>
    <property type="project" value="UniProtKB-UniRule"/>
</dbReference>
<dbReference type="GO" id="GO:0006437">
    <property type="term" value="P:tyrosyl-tRNA aminoacylation"/>
    <property type="evidence" value="ECO:0007669"/>
    <property type="project" value="UniProtKB-UniRule"/>
</dbReference>
<dbReference type="CDD" id="cd00805">
    <property type="entry name" value="TyrRS_core"/>
    <property type="match status" value="1"/>
</dbReference>
<dbReference type="FunFam" id="1.10.240.10:FF:000001">
    <property type="entry name" value="Tyrosine--tRNA ligase"/>
    <property type="match status" value="1"/>
</dbReference>
<dbReference type="FunFam" id="3.40.50.620:FF:000008">
    <property type="entry name" value="Tyrosine--tRNA ligase"/>
    <property type="match status" value="1"/>
</dbReference>
<dbReference type="Gene3D" id="3.40.50.620">
    <property type="entry name" value="HUPs"/>
    <property type="match status" value="1"/>
</dbReference>
<dbReference type="Gene3D" id="3.10.290.10">
    <property type="entry name" value="RNA-binding S4 domain"/>
    <property type="match status" value="1"/>
</dbReference>
<dbReference type="Gene3D" id="1.10.240.10">
    <property type="entry name" value="Tyrosyl-Transfer RNA Synthetase"/>
    <property type="match status" value="1"/>
</dbReference>
<dbReference type="HAMAP" id="MF_02006">
    <property type="entry name" value="Tyr_tRNA_synth_type1"/>
    <property type="match status" value="1"/>
</dbReference>
<dbReference type="InterPro" id="IPR002305">
    <property type="entry name" value="aa-tRNA-synth_Ic"/>
</dbReference>
<dbReference type="InterPro" id="IPR014729">
    <property type="entry name" value="Rossmann-like_a/b/a_fold"/>
</dbReference>
<dbReference type="InterPro" id="IPR036986">
    <property type="entry name" value="S4_RNA-bd_sf"/>
</dbReference>
<dbReference type="InterPro" id="IPR002307">
    <property type="entry name" value="Tyr-tRNA-ligase"/>
</dbReference>
<dbReference type="InterPro" id="IPR024088">
    <property type="entry name" value="Tyr-tRNA-ligase_bac-type"/>
</dbReference>
<dbReference type="InterPro" id="IPR024107">
    <property type="entry name" value="Tyr-tRNA-ligase_bac_1"/>
</dbReference>
<dbReference type="NCBIfam" id="TIGR00234">
    <property type="entry name" value="tyrS"/>
    <property type="match status" value="1"/>
</dbReference>
<dbReference type="PANTHER" id="PTHR11766:SF0">
    <property type="entry name" value="TYROSINE--TRNA LIGASE, MITOCHONDRIAL"/>
    <property type="match status" value="1"/>
</dbReference>
<dbReference type="PANTHER" id="PTHR11766">
    <property type="entry name" value="TYROSYL-TRNA SYNTHETASE"/>
    <property type="match status" value="1"/>
</dbReference>
<dbReference type="Pfam" id="PF00579">
    <property type="entry name" value="tRNA-synt_1b"/>
    <property type="match status" value="1"/>
</dbReference>
<dbReference type="PRINTS" id="PR01040">
    <property type="entry name" value="TRNASYNTHTYR"/>
</dbReference>
<dbReference type="SUPFAM" id="SSF55174">
    <property type="entry name" value="Alpha-L RNA-binding motif"/>
    <property type="match status" value="1"/>
</dbReference>
<dbReference type="SUPFAM" id="SSF52374">
    <property type="entry name" value="Nucleotidylyl transferase"/>
    <property type="match status" value="1"/>
</dbReference>
<dbReference type="PROSITE" id="PS50889">
    <property type="entry name" value="S4"/>
    <property type="match status" value="1"/>
</dbReference>